<protein>
    <recommendedName>
        <fullName evidence="1">UPF0102 protein FTF0898c</fullName>
    </recommendedName>
</protein>
<accession>Q14HU9</accession>
<evidence type="ECO:0000255" key="1">
    <source>
        <dbReference type="HAMAP-Rule" id="MF_00048"/>
    </source>
</evidence>
<proteinExistence type="inferred from homology"/>
<dbReference type="EMBL" id="AM286280">
    <property type="protein sequence ID" value="CAL08914.1"/>
    <property type="molecule type" value="Genomic_DNA"/>
</dbReference>
<dbReference type="RefSeq" id="WP_003020901.1">
    <property type="nucleotide sequence ID" value="NC_008245.1"/>
</dbReference>
<dbReference type="SMR" id="Q14HU9"/>
<dbReference type="KEGG" id="ftf:FTF0898c"/>
<dbReference type="HOGENOM" id="CLU_115353_1_1_6"/>
<dbReference type="GO" id="GO:0003676">
    <property type="term" value="F:nucleic acid binding"/>
    <property type="evidence" value="ECO:0007669"/>
    <property type="project" value="InterPro"/>
</dbReference>
<dbReference type="Gene3D" id="3.40.1350.10">
    <property type="match status" value="1"/>
</dbReference>
<dbReference type="HAMAP" id="MF_00048">
    <property type="entry name" value="UPF0102"/>
    <property type="match status" value="1"/>
</dbReference>
<dbReference type="InterPro" id="IPR011335">
    <property type="entry name" value="Restrct_endonuc-II-like"/>
</dbReference>
<dbReference type="InterPro" id="IPR011856">
    <property type="entry name" value="tRNA_endonuc-like_dom_sf"/>
</dbReference>
<dbReference type="InterPro" id="IPR003509">
    <property type="entry name" value="UPF0102_YraN-like"/>
</dbReference>
<dbReference type="NCBIfam" id="NF009150">
    <property type="entry name" value="PRK12497.1-3"/>
    <property type="match status" value="1"/>
</dbReference>
<dbReference type="NCBIfam" id="NF011275">
    <property type="entry name" value="PRK14682.1"/>
    <property type="match status" value="1"/>
</dbReference>
<dbReference type="NCBIfam" id="TIGR00252">
    <property type="entry name" value="YraN family protein"/>
    <property type="match status" value="1"/>
</dbReference>
<dbReference type="PANTHER" id="PTHR34039">
    <property type="entry name" value="UPF0102 PROTEIN YRAN"/>
    <property type="match status" value="1"/>
</dbReference>
<dbReference type="PANTHER" id="PTHR34039:SF1">
    <property type="entry name" value="UPF0102 PROTEIN YRAN"/>
    <property type="match status" value="1"/>
</dbReference>
<dbReference type="Pfam" id="PF02021">
    <property type="entry name" value="UPF0102"/>
    <property type="match status" value="1"/>
</dbReference>
<dbReference type="SUPFAM" id="SSF52980">
    <property type="entry name" value="Restriction endonuclease-like"/>
    <property type="match status" value="1"/>
</dbReference>
<gene>
    <name type="ordered locus">FTF0898c</name>
</gene>
<sequence length="117" mass="13558">MQTIEIGNKAELQACKFLHTQALEILAHNFKALPYGEIDIIALDKDTLIFIEVKYRSKTKFAQAEEMLTYSKQQKLVNSASIYLQHNPQYQDYQCRFDLIAINESNINWIKNAFGVI</sequence>
<name>Y898_FRAT1</name>
<reference key="1">
    <citation type="journal article" date="2007" name="PLoS ONE">
        <title>Genome sequencing shows that European isolates of Francisella tularensis subspecies tularensis are almost identical to US laboratory strain Schu S4.</title>
        <authorList>
            <person name="Chaudhuri R.R."/>
            <person name="Ren C.-P."/>
            <person name="Desmond L."/>
            <person name="Vincent G.A."/>
            <person name="Silman N.J."/>
            <person name="Brehm J.K."/>
            <person name="Elmore M.J."/>
            <person name="Hudson M.J."/>
            <person name="Forsman M."/>
            <person name="Isherwood K.E."/>
            <person name="Gurycova D."/>
            <person name="Minton N.P."/>
            <person name="Titball R.W."/>
            <person name="Pallen M.J."/>
            <person name="Vipond R."/>
        </authorList>
    </citation>
    <scope>NUCLEOTIDE SEQUENCE [LARGE SCALE GENOMIC DNA]</scope>
    <source>
        <strain>FSC 198</strain>
    </source>
</reference>
<feature type="chain" id="PRO_0000336180" description="UPF0102 protein FTF0898c">
    <location>
        <begin position="1"/>
        <end position="117"/>
    </location>
</feature>
<comment type="similarity">
    <text evidence="1">Belongs to the UPF0102 family.</text>
</comment>
<organism>
    <name type="scientific">Francisella tularensis subsp. tularensis (strain FSC 198)</name>
    <dbReference type="NCBI Taxonomy" id="393115"/>
    <lineage>
        <taxon>Bacteria</taxon>
        <taxon>Pseudomonadati</taxon>
        <taxon>Pseudomonadota</taxon>
        <taxon>Gammaproteobacteria</taxon>
        <taxon>Thiotrichales</taxon>
        <taxon>Francisellaceae</taxon>
        <taxon>Francisella</taxon>
    </lineage>
</organism>